<keyword id="KW-0413">Isomerase</keyword>
<keyword id="KW-0697">Rotamase</keyword>
<keyword id="KW-0732">Signal</keyword>
<protein>
    <recommendedName>
        <fullName>Putative peptidyl-prolyl cis-trans isomerase jhp_0161</fullName>
        <shortName>PPIase jhp_0161</shortName>
        <ecNumber>5.2.1.8</ecNumber>
    </recommendedName>
    <alternativeName>
        <fullName>Rotamase jhp_0161</fullName>
    </alternativeName>
</protein>
<proteinExistence type="inferred from homology"/>
<comment type="catalytic activity">
    <reaction>
        <text>[protein]-peptidylproline (omega=180) = [protein]-peptidylproline (omega=0)</text>
        <dbReference type="Rhea" id="RHEA:16237"/>
        <dbReference type="Rhea" id="RHEA-COMP:10747"/>
        <dbReference type="Rhea" id="RHEA-COMP:10748"/>
        <dbReference type="ChEBI" id="CHEBI:83833"/>
        <dbReference type="ChEBI" id="CHEBI:83834"/>
        <dbReference type="EC" id="5.2.1.8"/>
    </reaction>
</comment>
<name>Y161_HELPJ</name>
<feature type="signal peptide" evidence="1">
    <location>
        <begin position="1"/>
        <end position="21"/>
    </location>
</feature>
<feature type="chain" id="PRO_0000025548" description="Putative peptidyl-prolyl cis-trans isomerase jhp_0161">
    <location>
        <begin position="22"/>
        <end position="299"/>
    </location>
</feature>
<feature type="domain" description="PpiC" evidence="2">
    <location>
        <begin position="154"/>
        <end position="253"/>
    </location>
</feature>
<sequence>MKKNILNLALVGALSASFLMAKPAHNANNSTHNTKETTDASAGVLATVDGRPITKSDFDMIKQRNPNFDFDKLKEKEKEALIEQAIRTALVENEAKAEKLNQTPEFKAMMEAVKKQALVEFWAKKQAEEVKKIQIPEKEMQDFYNANKDQLFVKQEAHARHILVKTEDEAKRIISEIDKQPKAKKEAKFIELANRDTIDPNSKNAQNGGDLGKFQKNQMAPDFSKAAFALTPGDYTKTPVKTEFGYHIIYLISKDSPVTYTYEQAKPTIKGMLQEKLFQERMNQRIEELRKHAKIVINK</sequence>
<gene>
    <name type="ordered locus">jhp_0161</name>
</gene>
<evidence type="ECO:0000255" key="1"/>
<evidence type="ECO:0000255" key="2">
    <source>
        <dbReference type="PROSITE-ProRule" id="PRU00278"/>
    </source>
</evidence>
<accession>Q9ZMQ7</accession>
<reference key="1">
    <citation type="journal article" date="1999" name="Nature">
        <title>Genomic sequence comparison of two unrelated isolates of the human gastric pathogen Helicobacter pylori.</title>
        <authorList>
            <person name="Alm R.A."/>
            <person name="Ling L.-S.L."/>
            <person name="Moir D.T."/>
            <person name="King B.L."/>
            <person name="Brown E.D."/>
            <person name="Doig P.C."/>
            <person name="Smith D.R."/>
            <person name="Noonan B."/>
            <person name="Guild B.C."/>
            <person name="deJonge B.L."/>
            <person name="Carmel G."/>
            <person name="Tummino P.J."/>
            <person name="Caruso A."/>
            <person name="Uria-Nickelsen M."/>
            <person name="Mills D.M."/>
            <person name="Ives C."/>
            <person name="Gibson R."/>
            <person name="Merberg D."/>
            <person name="Mills S.D."/>
            <person name="Jiang Q."/>
            <person name="Taylor D.E."/>
            <person name="Vovis G.F."/>
            <person name="Trust T.J."/>
        </authorList>
    </citation>
    <scope>NUCLEOTIDE SEQUENCE [LARGE SCALE GENOMIC DNA]</scope>
    <source>
        <strain>J99 / ATCC 700824</strain>
    </source>
</reference>
<organism>
    <name type="scientific">Helicobacter pylori (strain J99 / ATCC 700824)</name>
    <name type="common">Campylobacter pylori J99</name>
    <dbReference type="NCBI Taxonomy" id="85963"/>
    <lineage>
        <taxon>Bacteria</taxon>
        <taxon>Pseudomonadati</taxon>
        <taxon>Campylobacterota</taxon>
        <taxon>Epsilonproteobacteria</taxon>
        <taxon>Campylobacterales</taxon>
        <taxon>Helicobacteraceae</taxon>
        <taxon>Helicobacter</taxon>
    </lineage>
</organism>
<dbReference type="EC" id="5.2.1.8"/>
<dbReference type="EMBL" id="AE001439">
    <property type="protein sequence ID" value="AAD05744.1"/>
    <property type="molecule type" value="Genomic_DNA"/>
</dbReference>
<dbReference type="PIR" id="B71967">
    <property type="entry name" value="B71967"/>
</dbReference>
<dbReference type="RefSeq" id="WP_000739442.1">
    <property type="nucleotide sequence ID" value="NC_000921.1"/>
</dbReference>
<dbReference type="SMR" id="Q9ZMQ7"/>
<dbReference type="KEGG" id="hpj:jhp_0161"/>
<dbReference type="PATRIC" id="fig|85963.30.peg.861"/>
<dbReference type="eggNOG" id="COG0760">
    <property type="taxonomic scope" value="Bacteria"/>
</dbReference>
<dbReference type="Proteomes" id="UP000000804">
    <property type="component" value="Chromosome"/>
</dbReference>
<dbReference type="GO" id="GO:0003755">
    <property type="term" value="F:peptidyl-prolyl cis-trans isomerase activity"/>
    <property type="evidence" value="ECO:0007669"/>
    <property type="project" value="UniProtKB-KW"/>
</dbReference>
<dbReference type="Gene3D" id="1.10.8.1040">
    <property type="match status" value="1"/>
</dbReference>
<dbReference type="Gene3D" id="3.10.50.40">
    <property type="match status" value="1"/>
</dbReference>
<dbReference type="InterPro" id="IPR046357">
    <property type="entry name" value="PPIase_dom_sf"/>
</dbReference>
<dbReference type="InterPro" id="IPR000297">
    <property type="entry name" value="PPIase_PpiC"/>
</dbReference>
<dbReference type="InterPro" id="IPR023058">
    <property type="entry name" value="PPIase_PpiC_CS"/>
</dbReference>
<dbReference type="InterPro" id="IPR050245">
    <property type="entry name" value="PrsA_foldase"/>
</dbReference>
<dbReference type="PANTHER" id="PTHR47245:SF2">
    <property type="entry name" value="PEPTIDYL-PROLYL CIS-TRANS ISOMERASE HP_0175-RELATED"/>
    <property type="match status" value="1"/>
</dbReference>
<dbReference type="PANTHER" id="PTHR47245">
    <property type="entry name" value="PEPTIDYLPROLYL ISOMERASE"/>
    <property type="match status" value="1"/>
</dbReference>
<dbReference type="Pfam" id="PF00639">
    <property type="entry name" value="Rotamase"/>
    <property type="match status" value="1"/>
</dbReference>
<dbReference type="SUPFAM" id="SSF54534">
    <property type="entry name" value="FKBP-like"/>
    <property type="match status" value="1"/>
</dbReference>
<dbReference type="PROSITE" id="PS01096">
    <property type="entry name" value="PPIC_PPIASE_1"/>
    <property type="match status" value="1"/>
</dbReference>
<dbReference type="PROSITE" id="PS50198">
    <property type="entry name" value="PPIC_PPIASE_2"/>
    <property type="match status" value="1"/>
</dbReference>